<comment type="function">
    <text evidence="1">Exhibits S-adenosyl-L-methionine-dependent methyltransferase activity.</text>
</comment>
<comment type="similarity">
    <text evidence="2">Belongs to the UPF0677 family.</text>
</comment>
<gene>
    <name type="ordered locus">MAP_4189c</name>
</gene>
<accession>Q73S87</accession>
<keyword id="KW-0489">Methyltransferase</keyword>
<keyword id="KW-1185">Reference proteome</keyword>
<keyword id="KW-0949">S-adenosyl-L-methionine</keyword>
<keyword id="KW-0808">Transferase</keyword>
<evidence type="ECO:0000250" key="1"/>
<evidence type="ECO:0000305" key="2"/>
<proteinExistence type="inferred from homology"/>
<organism>
    <name type="scientific">Mycolicibacterium paratuberculosis (strain ATCC BAA-968 / K-10)</name>
    <name type="common">Mycobacterium paratuberculosis</name>
    <dbReference type="NCBI Taxonomy" id="262316"/>
    <lineage>
        <taxon>Bacteria</taxon>
        <taxon>Bacillati</taxon>
        <taxon>Actinomycetota</taxon>
        <taxon>Actinomycetes</taxon>
        <taxon>Mycobacteriales</taxon>
        <taxon>Mycobacteriaceae</taxon>
        <taxon>Mycobacterium</taxon>
        <taxon>Mycobacterium avium complex (MAC)</taxon>
    </lineage>
</organism>
<sequence>MTRTHDDEWDLASSVGATATMVAAGRAMATKDPRGLIDDPFAEPLVRAVGVDFFTKMMDGELDLDAIENATPVRIQSMVDGMAVRTKYFDDYFVDATDAGVRRVVILASGLDSRAYRLPWPAGTVVYEIDQPRVIEFKSNTLAEVGAEPTATRRTIPIDLRGDWPAALSAAGFDPAAPTAWLAEGLLIYLPPEAQDRLFDNITALSAPGSTIATEFVPGIVDFDAERVREMSGSFRQHGVDIDMASLVYAGERNHVIDYLNGLGWRAEGVTRTELFHRHGIEVPAPENDDPLGEIIFISATRTR</sequence>
<protein>
    <recommendedName>
        <fullName>Putative S-adenosyl-L-methionine-dependent methyltransferase MAP_4189c</fullName>
        <ecNumber>2.1.1.-</ecNumber>
    </recommendedName>
</protein>
<feature type="chain" id="PRO_0000361187" description="Putative S-adenosyl-L-methionine-dependent methyltransferase MAP_4189c">
    <location>
        <begin position="1"/>
        <end position="304"/>
    </location>
</feature>
<feature type="binding site" evidence="1">
    <location>
        <position position="130"/>
    </location>
    <ligand>
        <name>S-adenosyl-L-methionine</name>
        <dbReference type="ChEBI" id="CHEBI:59789"/>
    </ligand>
</feature>
<feature type="binding site" evidence="1">
    <location>
        <begin position="159"/>
        <end position="160"/>
    </location>
    <ligand>
        <name>S-adenosyl-L-methionine</name>
        <dbReference type="ChEBI" id="CHEBI:59789"/>
    </ligand>
</feature>
<dbReference type="EC" id="2.1.1.-"/>
<dbReference type="EMBL" id="AE016958">
    <property type="protein sequence ID" value="AAS06739.1"/>
    <property type="molecule type" value="Genomic_DNA"/>
</dbReference>
<dbReference type="RefSeq" id="WP_003873489.1">
    <property type="nucleotide sequence ID" value="NZ_CP106873.1"/>
</dbReference>
<dbReference type="SMR" id="Q73S87"/>
<dbReference type="STRING" id="262316.MAP_4189c"/>
<dbReference type="KEGG" id="mpa:MAP_4189c"/>
<dbReference type="PATRIC" id="fig|262316.17.peg.4461"/>
<dbReference type="eggNOG" id="COG3315">
    <property type="taxonomic scope" value="Bacteria"/>
</dbReference>
<dbReference type="HOGENOM" id="CLU_056160_2_1_11"/>
<dbReference type="Proteomes" id="UP000000580">
    <property type="component" value="Chromosome"/>
</dbReference>
<dbReference type="GO" id="GO:0008168">
    <property type="term" value="F:methyltransferase activity"/>
    <property type="evidence" value="ECO:0007669"/>
    <property type="project" value="UniProtKB-KW"/>
</dbReference>
<dbReference type="GO" id="GO:0032259">
    <property type="term" value="P:methylation"/>
    <property type="evidence" value="ECO:0007669"/>
    <property type="project" value="UniProtKB-KW"/>
</dbReference>
<dbReference type="FunFam" id="3.40.50.150:FF:000152">
    <property type="entry name" value="S-adenosyl-L-methionine-dependent methyltransferase"/>
    <property type="match status" value="1"/>
</dbReference>
<dbReference type="Gene3D" id="3.40.50.150">
    <property type="entry name" value="Vaccinia Virus protein VP39"/>
    <property type="match status" value="1"/>
</dbReference>
<dbReference type="InterPro" id="IPR007213">
    <property type="entry name" value="Ppm1/Ppm2/Tcmp"/>
</dbReference>
<dbReference type="InterPro" id="IPR029063">
    <property type="entry name" value="SAM-dependent_MTases_sf"/>
</dbReference>
<dbReference type="InterPro" id="IPR011610">
    <property type="entry name" value="SAM_mthyl_Trfase_ML2640-like"/>
</dbReference>
<dbReference type="NCBIfam" id="TIGR00027">
    <property type="entry name" value="mthyl_TIGR00027"/>
    <property type="match status" value="1"/>
</dbReference>
<dbReference type="PANTHER" id="PTHR43619">
    <property type="entry name" value="S-ADENOSYL-L-METHIONINE-DEPENDENT METHYLTRANSFERASE YKTD-RELATED"/>
    <property type="match status" value="1"/>
</dbReference>
<dbReference type="PANTHER" id="PTHR43619:SF2">
    <property type="entry name" value="S-ADENOSYL-L-METHIONINE-DEPENDENT METHYLTRANSFERASES SUPERFAMILY PROTEIN"/>
    <property type="match status" value="1"/>
</dbReference>
<dbReference type="Pfam" id="PF04072">
    <property type="entry name" value="LCM"/>
    <property type="match status" value="1"/>
</dbReference>
<dbReference type="SUPFAM" id="SSF53335">
    <property type="entry name" value="S-adenosyl-L-methionine-dependent methyltransferases"/>
    <property type="match status" value="1"/>
</dbReference>
<reference key="1">
    <citation type="journal article" date="2005" name="Proc. Natl. Acad. Sci. U.S.A.">
        <title>The complete genome sequence of Mycobacterium avium subspecies paratuberculosis.</title>
        <authorList>
            <person name="Li L."/>
            <person name="Bannantine J.P."/>
            <person name="Zhang Q."/>
            <person name="Amonsin A."/>
            <person name="May B.J."/>
            <person name="Alt D."/>
            <person name="Banerji N."/>
            <person name="Kanjilal S."/>
            <person name="Kapur V."/>
        </authorList>
    </citation>
    <scope>NUCLEOTIDE SEQUENCE [LARGE SCALE GENOMIC DNA]</scope>
    <source>
        <strain>ATCC BAA-968 / K-10</strain>
    </source>
</reference>
<name>Y4189_MYCPA</name>